<keyword id="KW-0193">Cuticle</keyword>
<keyword id="KW-0677">Repeat</keyword>
<keyword id="KW-0732">Signal</keyword>
<organism>
    <name type="scientific">Tenebrio molitor</name>
    <name type="common">Yellow mealworm beetle</name>
    <dbReference type="NCBI Taxonomy" id="7067"/>
    <lineage>
        <taxon>Eukaryota</taxon>
        <taxon>Metazoa</taxon>
        <taxon>Ecdysozoa</taxon>
        <taxon>Arthropoda</taxon>
        <taxon>Hexapoda</taxon>
        <taxon>Insecta</taxon>
        <taxon>Pterygota</taxon>
        <taxon>Neoptera</taxon>
        <taxon>Endopterygota</taxon>
        <taxon>Coleoptera</taxon>
        <taxon>Polyphaga</taxon>
        <taxon>Cucujiformia</taxon>
        <taxon>Tenebrionidae</taxon>
        <taxon>Tenebrio</taxon>
    </lineage>
</organism>
<accession>Q94804</accession>
<feature type="signal peptide" evidence="2">
    <location>
        <begin position="1"/>
        <end position="17"/>
    </location>
</feature>
<feature type="chain" id="PRO_0000006416" description="Cuticle protein LPCP-23">
    <location>
        <begin position="18"/>
        <end position="231"/>
    </location>
</feature>
<feature type="repeat" description="1">
    <location>
        <begin position="130"/>
        <end position="133"/>
    </location>
</feature>
<feature type="repeat" description="2">
    <location>
        <begin position="199"/>
        <end position="202"/>
    </location>
</feature>
<dbReference type="EMBL" id="Y09124">
    <property type="protein sequence ID" value="CAA70341.1"/>
    <property type="molecule type" value="Genomic_DNA"/>
</dbReference>
<dbReference type="PIR" id="T12012">
    <property type="entry name" value="T12012"/>
</dbReference>
<dbReference type="GO" id="GO:0042302">
    <property type="term" value="F:structural constituent of cuticle"/>
    <property type="evidence" value="ECO:0007669"/>
    <property type="project" value="UniProtKB-KW"/>
</dbReference>
<dbReference type="InterPro" id="IPR022727">
    <property type="entry name" value="Cuticle_C1"/>
</dbReference>
<dbReference type="PANTHER" id="PTHR39068">
    <property type="entry name" value="LARVAL/PUPAL CUTICLE PROTEIN H1C-LIKE PROTEIN-RELATED"/>
    <property type="match status" value="1"/>
</dbReference>
<dbReference type="PANTHER" id="PTHR39068:SF2">
    <property type="entry name" value="MIP24391P"/>
    <property type="match status" value="1"/>
</dbReference>
<dbReference type="Pfam" id="PF11018">
    <property type="entry name" value="Cuticle_3"/>
    <property type="match status" value="1"/>
</dbReference>
<sequence length="231" mass="23112">MAFKFVVFAAALAYANAGLLGAPAVATYAAGPAVAYSARPAVSTAYINQAAPFLAHAAPLAVAHAAPYAVHAPAVGASHQSVVRSLGGNQAVSHYSKAVDSAFSSVRKFDTRITNDALLRAHAPVAVAHAAPVVVHLTAAHAPVVSSYAHAPLVSSYAAHAPLVSSYAAHAPLVSSYAAHAPVLSTAYAAHAPVVSSYAAPVVARTAAVGYSPAAVVSHTSFTGLGASYAW</sequence>
<gene>
    <name type="primary">LPCP-23</name>
</gene>
<reference key="1">
    <citation type="journal article" date="1998" name="Eur. J. Biochem.">
        <title>Structure, organization and expression of two clustered cuticle protein genes during the metamorphosis of an insect, Tenebrio molitor.</title>
        <authorList>
            <person name="Rondot I."/>
            <person name="Quennedey B."/>
            <person name="Delachambre J."/>
        </authorList>
    </citation>
    <scope>NUCLEOTIDE SEQUENCE [GENOMIC DNA]</scope>
</reference>
<comment type="function">
    <text>Component of the cuticle of Tenebrio molitor.</text>
</comment>
<comment type="domain">
    <text evidence="1">The tetrapeptide (A-A-P-[AV]) repeats found throughout the protein are also present in many proteins constituting the protective envelope of other species.</text>
</comment>
<evidence type="ECO:0000250" key="1"/>
<evidence type="ECO:0000255" key="2"/>
<proteinExistence type="inferred from homology"/>
<protein>
    <recommendedName>
        <fullName>Cuticle protein LPCP-23</fullName>
    </recommendedName>
    <alternativeName>
        <fullName>TMLPCP-23</fullName>
    </alternativeName>
</protein>
<name>CU23_TENMO</name>